<comment type="function">
    <text evidence="1">Catalyzes the thiamine diphosphate-dependent decarboxylation of 2-oxoglutarate and the subsequent addition of the resulting succinic semialdehyde-thiamine pyrophosphate anion to isochorismate to yield 2-succinyl-5-enolpyruvyl-6-hydroxy-3-cyclohexene-1-carboxylate (SEPHCHC).</text>
</comment>
<comment type="catalytic activity">
    <reaction evidence="1">
        <text>isochorismate + 2-oxoglutarate + H(+) = 5-enolpyruvoyl-6-hydroxy-2-succinyl-cyclohex-3-ene-1-carboxylate + CO2</text>
        <dbReference type="Rhea" id="RHEA:25593"/>
        <dbReference type="ChEBI" id="CHEBI:15378"/>
        <dbReference type="ChEBI" id="CHEBI:16526"/>
        <dbReference type="ChEBI" id="CHEBI:16810"/>
        <dbReference type="ChEBI" id="CHEBI:29780"/>
        <dbReference type="ChEBI" id="CHEBI:58818"/>
        <dbReference type="EC" id="2.2.1.9"/>
    </reaction>
</comment>
<comment type="cofactor">
    <cofactor evidence="1">
        <name>Mg(2+)</name>
        <dbReference type="ChEBI" id="CHEBI:18420"/>
    </cofactor>
    <cofactor evidence="1">
        <name>Mn(2+)</name>
        <dbReference type="ChEBI" id="CHEBI:29035"/>
    </cofactor>
</comment>
<comment type="cofactor">
    <cofactor evidence="1">
        <name>thiamine diphosphate</name>
        <dbReference type="ChEBI" id="CHEBI:58937"/>
    </cofactor>
    <text evidence="1">Binds 1 thiamine pyrophosphate per subunit.</text>
</comment>
<comment type="pathway">
    <text evidence="1">Quinol/quinone metabolism; 1,4-dihydroxy-2-naphthoate biosynthesis; 1,4-dihydroxy-2-naphthoate from chorismate: step 2/7.</text>
</comment>
<comment type="pathway">
    <text evidence="1">Cofactor biosynthesis; phylloquinone biosynthesis.</text>
</comment>
<comment type="subunit">
    <text evidence="1">Homodimer.</text>
</comment>
<comment type="similarity">
    <text evidence="1">Belongs to the TPP enzyme family. MenD subfamily.</text>
</comment>
<gene>
    <name evidence="1" type="primary">menD</name>
    <name type="ordered locus">Syncc9605_1122</name>
</gene>
<feature type="chain" id="PRO_0000341870" description="2-succinyl-5-enolpyruvyl-6-hydroxy-3-cyclohexene-1-carboxylate synthase">
    <location>
        <begin position="1"/>
        <end position="561"/>
    </location>
</feature>
<organism>
    <name type="scientific">Synechococcus sp. (strain CC9605)</name>
    <dbReference type="NCBI Taxonomy" id="110662"/>
    <lineage>
        <taxon>Bacteria</taxon>
        <taxon>Bacillati</taxon>
        <taxon>Cyanobacteriota</taxon>
        <taxon>Cyanophyceae</taxon>
        <taxon>Synechococcales</taxon>
        <taxon>Synechococcaceae</taxon>
        <taxon>Synechococcus</taxon>
    </lineage>
</organism>
<name>MEND_SYNSC</name>
<accession>Q3AKK3</accession>
<evidence type="ECO:0000255" key="1">
    <source>
        <dbReference type="HAMAP-Rule" id="MF_01659"/>
    </source>
</evidence>
<dbReference type="EC" id="2.2.1.9" evidence="1"/>
<dbReference type="EMBL" id="CP000110">
    <property type="protein sequence ID" value="ABB34879.1"/>
    <property type="molecule type" value="Genomic_DNA"/>
</dbReference>
<dbReference type="RefSeq" id="WP_011364100.1">
    <property type="nucleotide sequence ID" value="NC_007516.1"/>
</dbReference>
<dbReference type="SMR" id="Q3AKK3"/>
<dbReference type="STRING" id="110662.Syncc9605_1122"/>
<dbReference type="KEGG" id="syd:Syncc9605_1122"/>
<dbReference type="eggNOG" id="COG1165">
    <property type="taxonomic scope" value="Bacteria"/>
</dbReference>
<dbReference type="HOGENOM" id="CLU_006051_3_0_3"/>
<dbReference type="OrthoDB" id="9791859at2"/>
<dbReference type="UniPathway" id="UPA00995"/>
<dbReference type="UniPathway" id="UPA01057">
    <property type="reaction ID" value="UER00164"/>
</dbReference>
<dbReference type="GO" id="GO:0070204">
    <property type="term" value="F:2-succinyl-5-enolpyruvyl-6-hydroxy-3-cyclohexene-1-carboxylic-acid synthase activity"/>
    <property type="evidence" value="ECO:0007669"/>
    <property type="project" value="UniProtKB-UniRule"/>
</dbReference>
<dbReference type="GO" id="GO:0000287">
    <property type="term" value="F:magnesium ion binding"/>
    <property type="evidence" value="ECO:0007669"/>
    <property type="project" value="UniProtKB-UniRule"/>
</dbReference>
<dbReference type="GO" id="GO:0030145">
    <property type="term" value="F:manganese ion binding"/>
    <property type="evidence" value="ECO:0007669"/>
    <property type="project" value="UniProtKB-UniRule"/>
</dbReference>
<dbReference type="GO" id="GO:0030976">
    <property type="term" value="F:thiamine pyrophosphate binding"/>
    <property type="evidence" value="ECO:0007669"/>
    <property type="project" value="UniProtKB-UniRule"/>
</dbReference>
<dbReference type="GO" id="GO:0009234">
    <property type="term" value="P:menaquinone biosynthetic process"/>
    <property type="evidence" value="ECO:0007669"/>
    <property type="project" value="InterPro"/>
</dbReference>
<dbReference type="GO" id="GO:0042372">
    <property type="term" value="P:phylloquinone biosynthetic process"/>
    <property type="evidence" value="ECO:0007669"/>
    <property type="project" value="UniProtKB-UniRule"/>
</dbReference>
<dbReference type="CDD" id="cd07037">
    <property type="entry name" value="TPP_PYR_MenD"/>
    <property type="match status" value="1"/>
</dbReference>
<dbReference type="CDD" id="cd02009">
    <property type="entry name" value="TPP_SHCHC_synthase"/>
    <property type="match status" value="1"/>
</dbReference>
<dbReference type="Gene3D" id="3.40.50.970">
    <property type="match status" value="2"/>
</dbReference>
<dbReference type="Gene3D" id="3.40.50.1220">
    <property type="entry name" value="TPP-binding domain"/>
    <property type="match status" value="1"/>
</dbReference>
<dbReference type="HAMAP" id="MF_01659">
    <property type="entry name" value="MenD"/>
    <property type="match status" value="1"/>
</dbReference>
<dbReference type="InterPro" id="IPR004433">
    <property type="entry name" value="MenaQ_synth_MenD"/>
</dbReference>
<dbReference type="InterPro" id="IPR032264">
    <property type="entry name" value="MenD_middle"/>
</dbReference>
<dbReference type="InterPro" id="IPR029061">
    <property type="entry name" value="THDP-binding"/>
</dbReference>
<dbReference type="InterPro" id="IPR012001">
    <property type="entry name" value="Thiamin_PyroP_enz_TPP-bd_dom"/>
</dbReference>
<dbReference type="InterPro" id="IPR011766">
    <property type="entry name" value="TPP_enzyme_TPP-bd"/>
</dbReference>
<dbReference type="NCBIfam" id="TIGR00173">
    <property type="entry name" value="menD"/>
    <property type="match status" value="1"/>
</dbReference>
<dbReference type="PANTHER" id="PTHR42916">
    <property type="entry name" value="2-SUCCINYL-5-ENOLPYRUVYL-6-HYDROXY-3-CYCLOHEXENE-1-CARBOXYLATE SYNTHASE"/>
    <property type="match status" value="1"/>
</dbReference>
<dbReference type="PANTHER" id="PTHR42916:SF1">
    <property type="entry name" value="PROTEIN PHYLLO, CHLOROPLASTIC"/>
    <property type="match status" value="1"/>
</dbReference>
<dbReference type="Pfam" id="PF02775">
    <property type="entry name" value="TPP_enzyme_C"/>
    <property type="match status" value="1"/>
</dbReference>
<dbReference type="Pfam" id="PF16582">
    <property type="entry name" value="TPP_enzyme_M_2"/>
    <property type="match status" value="1"/>
</dbReference>
<dbReference type="Pfam" id="PF02776">
    <property type="entry name" value="TPP_enzyme_N"/>
    <property type="match status" value="1"/>
</dbReference>
<dbReference type="PIRSF" id="PIRSF004983">
    <property type="entry name" value="MenD"/>
    <property type="match status" value="1"/>
</dbReference>
<dbReference type="SUPFAM" id="SSF52518">
    <property type="entry name" value="Thiamin diphosphate-binding fold (THDP-binding)"/>
    <property type="match status" value="2"/>
</dbReference>
<proteinExistence type="inferred from homology"/>
<protein>
    <recommendedName>
        <fullName evidence="1">2-succinyl-5-enolpyruvyl-6-hydroxy-3-cyclohexene-1-carboxylate synthase</fullName>
        <shortName evidence="1">SEPHCHC synthase</shortName>
        <ecNumber evidence="1">2.2.1.9</ecNumber>
    </recommendedName>
</protein>
<sequence length="561" mass="59334">MQAALTLLEALCLQGLKQLVLCPGSRSGPLATAAGVLASQAKLQLVTAIDERSAAFLALGMATAHGRVVAVVTTSGTAVSNLLPAAVEADRSCQPLLLLTADRPVRLKNCGANQTVNQESFLLAACRWFGSGAADGIHTQANDALNALAVKAWQQAQGAGTGPPGAVHLNLPFEEPLHTTLEQQQQLASAALPPTACPEPSPGIGPALRLDPERPGVVVAGPWRGLTLSLEAHQQALHRWLNLSGWPLLADPLAALPPDCPNRIEHWELQLDRLSLPDDAQVLRLGPMPASRRLEAWLQRHQGPQLLITEGDPRPLDPLHTANQWSGGMAAWIAQQPGLKQATKPSVGTNDLSPWLETQLPLRGAVTEPALAYWLPQLLPEQLPVMLAASSPVRDWLTWGGYSCGRHRCFSFRGASGIDGTLSLAMGLAANLGPLALVTGDLALLHDSNGWLHASSAAAPPPLLVLLIDNGGGGIFQQLPIATPGFESLFAMPQQVDSLALAAAHGVPGRQVACLEDLQEALAWGLSQQRPVLLRLCSDRGRDAVLRQQLRAAAQNEGTEL</sequence>
<keyword id="KW-0460">Magnesium</keyword>
<keyword id="KW-0464">Manganese</keyword>
<keyword id="KW-0479">Metal-binding</keyword>
<keyword id="KW-0786">Thiamine pyrophosphate</keyword>
<keyword id="KW-0808">Transferase</keyword>
<reference key="1">
    <citation type="submission" date="2005-07" db="EMBL/GenBank/DDBJ databases">
        <title>Complete sequence of Synechococcus sp. CC9605.</title>
        <authorList>
            <consortium name="US DOE Joint Genome Institute"/>
            <person name="Copeland A."/>
            <person name="Lucas S."/>
            <person name="Lapidus A."/>
            <person name="Barry K."/>
            <person name="Detter J.C."/>
            <person name="Glavina T."/>
            <person name="Hammon N."/>
            <person name="Israni S."/>
            <person name="Pitluck S."/>
            <person name="Schmutz J."/>
            <person name="Martinez M."/>
            <person name="Larimer F."/>
            <person name="Land M."/>
            <person name="Kyrpides N."/>
            <person name="Ivanova N."/>
            <person name="Richardson P."/>
        </authorList>
    </citation>
    <scope>NUCLEOTIDE SEQUENCE [LARGE SCALE GENOMIC DNA]</scope>
    <source>
        <strain>CC9605</strain>
    </source>
</reference>